<organism>
    <name type="scientific">Citrus sinensis</name>
    <name type="common">Sweet orange</name>
    <name type="synonym">Citrus aurantium var. sinensis</name>
    <dbReference type="NCBI Taxonomy" id="2711"/>
    <lineage>
        <taxon>Eukaryota</taxon>
        <taxon>Viridiplantae</taxon>
        <taxon>Streptophyta</taxon>
        <taxon>Embryophyta</taxon>
        <taxon>Tracheophyta</taxon>
        <taxon>Spermatophyta</taxon>
        <taxon>Magnoliopsida</taxon>
        <taxon>eudicotyledons</taxon>
        <taxon>Gunneridae</taxon>
        <taxon>Pentapetalae</taxon>
        <taxon>rosids</taxon>
        <taxon>malvids</taxon>
        <taxon>Sapindales</taxon>
        <taxon>Rutaceae</taxon>
        <taxon>Aurantioideae</taxon>
        <taxon>Citrus</taxon>
    </lineage>
</organism>
<sequence>MGQKINPLGFRLGTTQSHHSLWFAKPKNYCEGLQEDQKIRNFIKNYIKKNIRISSGVEGIARIEIQKRIDLIQVIIYIGFPKLLLENRPRRIEELQMNVQKELNCVNRKINIAITRITNPYGHPNILAEFIAGQLKNRVSFRKAMKKAIELTEQADTKGIQVQIAGRLDGKEIARAEWIREGRVPLQTIGAKIDYCSYTVRTIYGVLGIKIWIFVDEKK</sequence>
<feature type="chain" id="PRO_0000276987" description="Small ribosomal subunit protein uS3c">
    <location>
        <begin position="1"/>
        <end position="219"/>
    </location>
</feature>
<feature type="domain" description="KH type-2">
    <location>
        <begin position="47"/>
        <end position="118"/>
    </location>
</feature>
<evidence type="ECO:0000250" key="1"/>
<evidence type="ECO:0000305" key="2"/>
<keyword id="KW-0150">Chloroplast</keyword>
<keyword id="KW-0934">Plastid</keyword>
<keyword id="KW-0687">Ribonucleoprotein</keyword>
<keyword id="KW-0689">Ribosomal protein</keyword>
<keyword id="KW-0694">RNA-binding</keyword>
<keyword id="KW-0699">rRNA-binding</keyword>
<reference key="1">
    <citation type="journal article" date="2006" name="BMC Plant Biol.">
        <title>The complete chloroplast genome sequence of Citrus sinensis (L.) Osbeck var 'Ridge Pineapple': organization and phylogenetic relationships to other angiosperms.</title>
        <authorList>
            <person name="Bausher M.G."/>
            <person name="Singh N.D."/>
            <person name="Lee S.-B."/>
            <person name="Jansen R.K."/>
            <person name="Daniell H."/>
        </authorList>
    </citation>
    <scope>NUCLEOTIDE SEQUENCE [LARGE SCALE GENOMIC DNA]</scope>
    <source>
        <strain>cv. Osbeck var. Ridge Pineapple</strain>
    </source>
</reference>
<comment type="subunit">
    <text evidence="1">Part of the 30S ribosomal subunit.</text>
</comment>
<comment type="subcellular location">
    <subcellularLocation>
        <location>Plastid</location>
        <location>Chloroplast</location>
    </subcellularLocation>
</comment>
<comment type="similarity">
    <text evidence="2">Belongs to the universal ribosomal protein uS3 family.</text>
</comment>
<dbReference type="EMBL" id="DQ864733">
    <property type="protein sequence ID" value="ABI49057.1"/>
    <property type="molecule type" value="Genomic_DNA"/>
</dbReference>
<dbReference type="RefSeq" id="YP_740514.1">
    <property type="nucleotide sequence ID" value="NC_008334.1"/>
</dbReference>
<dbReference type="SMR" id="Q09MD9"/>
<dbReference type="GeneID" id="4271190"/>
<dbReference type="KEGG" id="cit:4271190"/>
<dbReference type="OrthoDB" id="889101at71240"/>
<dbReference type="GO" id="GO:0009507">
    <property type="term" value="C:chloroplast"/>
    <property type="evidence" value="ECO:0007669"/>
    <property type="project" value="UniProtKB-SubCell"/>
</dbReference>
<dbReference type="GO" id="GO:1990904">
    <property type="term" value="C:ribonucleoprotein complex"/>
    <property type="evidence" value="ECO:0007669"/>
    <property type="project" value="UniProtKB-KW"/>
</dbReference>
<dbReference type="GO" id="GO:0005840">
    <property type="term" value="C:ribosome"/>
    <property type="evidence" value="ECO:0007669"/>
    <property type="project" value="UniProtKB-KW"/>
</dbReference>
<dbReference type="GO" id="GO:0019843">
    <property type="term" value="F:rRNA binding"/>
    <property type="evidence" value="ECO:0007669"/>
    <property type="project" value="UniProtKB-UniRule"/>
</dbReference>
<dbReference type="GO" id="GO:0003735">
    <property type="term" value="F:structural constituent of ribosome"/>
    <property type="evidence" value="ECO:0007669"/>
    <property type="project" value="InterPro"/>
</dbReference>
<dbReference type="GO" id="GO:0006412">
    <property type="term" value="P:translation"/>
    <property type="evidence" value="ECO:0007669"/>
    <property type="project" value="UniProtKB-UniRule"/>
</dbReference>
<dbReference type="CDD" id="cd02412">
    <property type="entry name" value="KH-II_30S_S3"/>
    <property type="match status" value="1"/>
</dbReference>
<dbReference type="FunFam" id="3.30.1140.32:FF:000003">
    <property type="entry name" value="30S ribosomal protein S3, chloroplastic"/>
    <property type="match status" value="1"/>
</dbReference>
<dbReference type="FunFam" id="3.30.300.20:FF:000008">
    <property type="entry name" value="30S ribosomal protein S3, chloroplastic"/>
    <property type="match status" value="1"/>
</dbReference>
<dbReference type="Gene3D" id="3.30.300.20">
    <property type="match status" value="1"/>
</dbReference>
<dbReference type="Gene3D" id="3.30.1140.32">
    <property type="entry name" value="Ribosomal protein S3, C-terminal domain"/>
    <property type="match status" value="1"/>
</dbReference>
<dbReference type="HAMAP" id="MF_01309_B">
    <property type="entry name" value="Ribosomal_uS3_B"/>
    <property type="match status" value="1"/>
</dbReference>
<dbReference type="InterPro" id="IPR015946">
    <property type="entry name" value="KH_dom-like_a/b"/>
</dbReference>
<dbReference type="InterPro" id="IPR004044">
    <property type="entry name" value="KH_dom_type_2"/>
</dbReference>
<dbReference type="InterPro" id="IPR009019">
    <property type="entry name" value="KH_sf_prok-type"/>
</dbReference>
<dbReference type="InterPro" id="IPR036419">
    <property type="entry name" value="Ribosomal_S3_C_sf"/>
</dbReference>
<dbReference type="InterPro" id="IPR005704">
    <property type="entry name" value="Ribosomal_uS3_bac-typ"/>
</dbReference>
<dbReference type="InterPro" id="IPR001351">
    <property type="entry name" value="Ribosomal_uS3_C"/>
</dbReference>
<dbReference type="InterPro" id="IPR018280">
    <property type="entry name" value="Ribosomal_uS3_CS"/>
</dbReference>
<dbReference type="NCBIfam" id="TIGR01009">
    <property type="entry name" value="rpsC_bact"/>
    <property type="match status" value="1"/>
</dbReference>
<dbReference type="PANTHER" id="PTHR11760">
    <property type="entry name" value="30S/40S RIBOSOMAL PROTEIN S3"/>
    <property type="match status" value="1"/>
</dbReference>
<dbReference type="PANTHER" id="PTHR11760:SF19">
    <property type="entry name" value="SMALL RIBOSOMAL SUBUNIT PROTEIN US3C"/>
    <property type="match status" value="1"/>
</dbReference>
<dbReference type="Pfam" id="PF00189">
    <property type="entry name" value="Ribosomal_S3_C"/>
    <property type="match status" value="1"/>
</dbReference>
<dbReference type="SUPFAM" id="SSF54814">
    <property type="entry name" value="Prokaryotic type KH domain (KH-domain type II)"/>
    <property type="match status" value="1"/>
</dbReference>
<dbReference type="SUPFAM" id="SSF54821">
    <property type="entry name" value="Ribosomal protein S3 C-terminal domain"/>
    <property type="match status" value="1"/>
</dbReference>
<dbReference type="PROSITE" id="PS50823">
    <property type="entry name" value="KH_TYPE_2"/>
    <property type="match status" value="1"/>
</dbReference>
<dbReference type="PROSITE" id="PS00548">
    <property type="entry name" value="RIBOSOMAL_S3"/>
    <property type="match status" value="1"/>
</dbReference>
<proteinExistence type="inferred from homology"/>
<name>RR3_CITSI</name>
<gene>
    <name type="primary">rps3</name>
</gene>
<accession>Q09MD9</accession>
<protein>
    <recommendedName>
        <fullName evidence="2">Small ribosomal subunit protein uS3c</fullName>
    </recommendedName>
    <alternativeName>
        <fullName>30S ribosomal protein S3, chloroplastic</fullName>
    </alternativeName>
</protein>
<geneLocation type="chloroplast"/>